<proteinExistence type="evidence at protein level"/>
<dbReference type="PIR" id="C60409">
    <property type="entry name" value="C60409"/>
</dbReference>
<dbReference type="GO" id="GO:0005576">
    <property type="term" value="C:extracellular region"/>
    <property type="evidence" value="ECO:0007669"/>
    <property type="project" value="UniProtKB-SubCell"/>
</dbReference>
<dbReference type="GO" id="GO:0006952">
    <property type="term" value="P:defense response"/>
    <property type="evidence" value="ECO:0007669"/>
    <property type="project" value="UniProtKB-KW"/>
</dbReference>
<dbReference type="GO" id="GO:0007218">
    <property type="term" value="P:neuropeptide signaling pathway"/>
    <property type="evidence" value="ECO:0007669"/>
    <property type="project" value="UniProtKB-KW"/>
</dbReference>
<dbReference type="GO" id="GO:0007217">
    <property type="term" value="P:tachykinin receptor signaling pathway"/>
    <property type="evidence" value="ECO:0007669"/>
    <property type="project" value="InterPro"/>
</dbReference>
<dbReference type="InterPro" id="IPR013055">
    <property type="entry name" value="Tachy_Neuro_lke_CS"/>
</dbReference>
<dbReference type="InterPro" id="IPR008215">
    <property type="entry name" value="Tachykinin_dom"/>
</dbReference>
<dbReference type="Pfam" id="PF02202">
    <property type="entry name" value="Tachykinin"/>
    <property type="match status" value="1"/>
</dbReference>
<dbReference type="PROSITE" id="PS00267">
    <property type="entry name" value="TACHYKININ"/>
    <property type="match status" value="1"/>
</dbReference>
<name>TKN2_PSEGU</name>
<reference key="1">
    <citation type="journal article" date="1990" name="Peptides">
        <title>Six novel tachykinin- and bombesin-related peptides from the skin of the Australian frog Pseudophryne guntheri.</title>
        <authorList>
            <person name="Simmaco M."/>
            <person name="Severini C."/>
            <person name="de Biase D."/>
            <person name="Barra D."/>
            <person name="Bossa F."/>
            <person name="Roberts J.D."/>
            <person name="Melchiorri P."/>
            <person name="Erspamer V."/>
        </authorList>
    </citation>
    <scope>PROTEIN SEQUENCE</scope>
    <scope>PYROGLUTAMATE FORMATION AT GLN-1</scope>
    <scope>AMIDATION AT MET-11</scope>
    <source>
        <tissue>Skin secretion</tissue>
    </source>
</reference>
<protein>
    <recommendedName>
        <fullName>Kassinin-like peptide K-II</fullName>
    </recommendedName>
    <alternativeName>
        <fullName>PG-KII</fullName>
    </alternativeName>
</protein>
<keyword id="KW-0027">Amidation</keyword>
<keyword id="KW-0878">Amphibian defense peptide</keyword>
<keyword id="KW-0903">Direct protein sequencing</keyword>
<keyword id="KW-0527">Neuropeptide</keyword>
<keyword id="KW-0873">Pyrrolidone carboxylic acid</keyword>
<keyword id="KW-0964">Secreted</keyword>
<feature type="peptide" id="PRO_0000044401" description="Kassinin-like peptide K-II">
    <location>
        <begin position="1"/>
        <end position="11"/>
    </location>
</feature>
<feature type="modified residue" description="Pyrrolidone carboxylic acid" evidence="1">
    <location>
        <position position="1"/>
    </location>
</feature>
<feature type="modified residue" description="Methionine amide" evidence="1">
    <location>
        <position position="11"/>
    </location>
</feature>
<sequence>QPNPDEFVGLM</sequence>
<organism>
    <name type="scientific">Pseudophryne guentheri</name>
    <name type="common">Guenther's toadlet</name>
    <dbReference type="NCBI Taxonomy" id="30349"/>
    <lineage>
        <taxon>Eukaryota</taxon>
        <taxon>Metazoa</taxon>
        <taxon>Chordata</taxon>
        <taxon>Craniata</taxon>
        <taxon>Vertebrata</taxon>
        <taxon>Euteleostomi</taxon>
        <taxon>Amphibia</taxon>
        <taxon>Batrachia</taxon>
        <taxon>Anura</taxon>
        <taxon>Neobatrachia</taxon>
        <taxon>Myobatrachoidea</taxon>
        <taxon>Myobatrachidae</taxon>
        <taxon>Myobatrachinae</taxon>
        <taxon>Pseudophryne</taxon>
    </lineage>
</organism>
<comment type="function">
    <text>Tachykinins are active peptides which excite neurons, evoke behavioral responses, are potent vasodilators and secretagogues, and contract (directly or indirectly) many smooth muscles.</text>
</comment>
<comment type="subcellular location">
    <subcellularLocation>
        <location>Secreted</location>
    </subcellularLocation>
</comment>
<comment type="tissue specificity">
    <text>Expressed by the skin glands.</text>
</comment>
<comment type="similarity">
    <text evidence="2">Belongs to the tachykinin family.</text>
</comment>
<accession>P42987</accession>
<evidence type="ECO:0000269" key="1">
    <source>
    </source>
</evidence>
<evidence type="ECO:0000305" key="2"/>